<accession>P52747</accession>
<accession>A8K518</accession>
<accession>B4DLY5</accession>
<accession>E7ER34</accession>
<accession>O75559</accession>
<accession>Q8WUK9</accession>
<gene>
    <name type="primary">ZNF143</name>
    <name type="synonym">SBF</name>
    <name type="synonym">STAF</name>
</gene>
<reference key="1">
    <citation type="journal article" date="2004" name="Nat. Genet.">
        <title>Complete sequencing and characterization of 21,243 full-length human cDNAs.</title>
        <authorList>
            <person name="Ota T."/>
            <person name="Suzuki Y."/>
            <person name="Nishikawa T."/>
            <person name="Otsuki T."/>
            <person name="Sugiyama T."/>
            <person name="Irie R."/>
            <person name="Wakamatsu A."/>
            <person name="Hayashi K."/>
            <person name="Sato H."/>
            <person name="Nagai K."/>
            <person name="Kimura K."/>
            <person name="Makita H."/>
            <person name="Sekine M."/>
            <person name="Obayashi M."/>
            <person name="Nishi T."/>
            <person name="Shibahara T."/>
            <person name="Tanaka T."/>
            <person name="Ishii S."/>
            <person name="Yamamoto J."/>
            <person name="Saito K."/>
            <person name="Kawai Y."/>
            <person name="Isono Y."/>
            <person name="Nakamura Y."/>
            <person name="Nagahari K."/>
            <person name="Murakami K."/>
            <person name="Yasuda T."/>
            <person name="Iwayanagi T."/>
            <person name="Wagatsuma M."/>
            <person name="Shiratori A."/>
            <person name="Sudo H."/>
            <person name="Hosoiri T."/>
            <person name="Kaku Y."/>
            <person name="Kodaira H."/>
            <person name="Kondo H."/>
            <person name="Sugawara M."/>
            <person name="Takahashi M."/>
            <person name="Kanda K."/>
            <person name="Yokoi T."/>
            <person name="Furuya T."/>
            <person name="Kikkawa E."/>
            <person name="Omura Y."/>
            <person name="Abe K."/>
            <person name="Kamihara K."/>
            <person name="Katsuta N."/>
            <person name="Sato K."/>
            <person name="Tanikawa M."/>
            <person name="Yamazaki M."/>
            <person name="Ninomiya K."/>
            <person name="Ishibashi T."/>
            <person name="Yamashita H."/>
            <person name="Murakawa K."/>
            <person name="Fujimori K."/>
            <person name="Tanai H."/>
            <person name="Kimata M."/>
            <person name="Watanabe M."/>
            <person name="Hiraoka S."/>
            <person name="Chiba Y."/>
            <person name="Ishida S."/>
            <person name="Ono Y."/>
            <person name="Takiguchi S."/>
            <person name="Watanabe S."/>
            <person name="Yosida M."/>
            <person name="Hotuta T."/>
            <person name="Kusano J."/>
            <person name="Kanehori K."/>
            <person name="Takahashi-Fujii A."/>
            <person name="Hara H."/>
            <person name="Tanase T.-O."/>
            <person name="Nomura Y."/>
            <person name="Togiya S."/>
            <person name="Komai F."/>
            <person name="Hara R."/>
            <person name="Takeuchi K."/>
            <person name="Arita M."/>
            <person name="Imose N."/>
            <person name="Musashino K."/>
            <person name="Yuuki H."/>
            <person name="Oshima A."/>
            <person name="Sasaki N."/>
            <person name="Aotsuka S."/>
            <person name="Yoshikawa Y."/>
            <person name="Matsunawa H."/>
            <person name="Ichihara T."/>
            <person name="Shiohata N."/>
            <person name="Sano S."/>
            <person name="Moriya S."/>
            <person name="Momiyama H."/>
            <person name="Satoh N."/>
            <person name="Takami S."/>
            <person name="Terashima Y."/>
            <person name="Suzuki O."/>
            <person name="Nakagawa S."/>
            <person name="Senoh A."/>
            <person name="Mizoguchi H."/>
            <person name="Goto Y."/>
            <person name="Shimizu F."/>
            <person name="Wakebe H."/>
            <person name="Hishigaki H."/>
            <person name="Watanabe T."/>
            <person name="Sugiyama A."/>
            <person name="Takemoto M."/>
            <person name="Kawakami B."/>
            <person name="Yamazaki M."/>
            <person name="Watanabe K."/>
            <person name="Kumagai A."/>
            <person name="Itakura S."/>
            <person name="Fukuzumi Y."/>
            <person name="Fujimori Y."/>
            <person name="Komiyama M."/>
            <person name="Tashiro H."/>
            <person name="Tanigami A."/>
            <person name="Fujiwara T."/>
            <person name="Ono T."/>
            <person name="Yamada K."/>
            <person name="Fujii Y."/>
            <person name="Ozaki K."/>
            <person name="Hirao M."/>
            <person name="Ohmori Y."/>
            <person name="Kawabata A."/>
            <person name="Hikiji T."/>
            <person name="Kobatake N."/>
            <person name="Inagaki H."/>
            <person name="Ikema Y."/>
            <person name="Okamoto S."/>
            <person name="Okitani R."/>
            <person name="Kawakami T."/>
            <person name="Noguchi S."/>
            <person name="Itoh T."/>
            <person name="Shigeta K."/>
            <person name="Senba T."/>
            <person name="Matsumura K."/>
            <person name="Nakajima Y."/>
            <person name="Mizuno T."/>
            <person name="Morinaga M."/>
            <person name="Sasaki M."/>
            <person name="Togashi T."/>
            <person name="Oyama M."/>
            <person name="Hata H."/>
            <person name="Watanabe M."/>
            <person name="Komatsu T."/>
            <person name="Mizushima-Sugano J."/>
            <person name="Satoh T."/>
            <person name="Shirai Y."/>
            <person name="Takahashi Y."/>
            <person name="Nakagawa K."/>
            <person name="Okumura K."/>
            <person name="Nagase T."/>
            <person name="Nomura N."/>
            <person name="Kikuchi H."/>
            <person name="Masuho Y."/>
            <person name="Yamashita R."/>
            <person name="Nakai K."/>
            <person name="Yada T."/>
            <person name="Nakamura Y."/>
            <person name="Ohara O."/>
            <person name="Isogai T."/>
            <person name="Sugano S."/>
        </authorList>
    </citation>
    <scope>NUCLEOTIDE SEQUENCE [LARGE SCALE MRNA] (ISOFORMS 1; 2 AND 3)</scope>
    <scope>VARIANT GLN-561</scope>
    <source>
        <tissue>Brain</tissue>
    </source>
</reference>
<reference key="2">
    <citation type="journal article" date="2006" name="Nature">
        <title>Human chromosome 11 DNA sequence and analysis including novel gene identification.</title>
        <authorList>
            <person name="Taylor T.D."/>
            <person name="Noguchi H."/>
            <person name="Totoki Y."/>
            <person name="Toyoda A."/>
            <person name="Kuroki Y."/>
            <person name="Dewar K."/>
            <person name="Lloyd C."/>
            <person name="Itoh T."/>
            <person name="Takeda T."/>
            <person name="Kim D.-W."/>
            <person name="She X."/>
            <person name="Barlow K.F."/>
            <person name="Bloom T."/>
            <person name="Bruford E."/>
            <person name="Chang J.L."/>
            <person name="Cuomo C.A."/>
            <person name="Eichler E."/>
            <person name="FitzGerald M.G."/>
            <person name="Jaffe D.B."/>
            <person name="LaButti K."/>
            <person name="Nicol R."/>
            <person name="Park H.-S."/>
            <person name="Seaman C."/>
            <person name="Sougnez C."/>
            <person name="Yang X."/>
            <person name="Zimmer A.R."/>
            <person name="Zody M.C."/>
            <person name="Birren B.W."/>
            <person name="Nusbaum C."/>
            <person name="Fujiyama A."/>
            <person name="Hattori M."/>
            <person name="Rogers J."/>
            <person name="Lander E.S."/>
            <person name="Sakaki Y."/>
        </authorList>
    </citation>
    <scope>NUCLEOTIDE SEQUENCE [LARGE SCALE GENOMIC DNA]</scope>
</reference>
<reference key="3">
    <citation type="journal article" date="2004" name="Genome Res.">
        <title>The status, quality, and expansion of the NIH full-length cDNA project: the Mammalian Gene Collection (MGC).</title>
        <authorList>
            <consortium name="The MGC Project Team"/>
        </authorList>
    </citation>
    <scope>NUCLEOTIDE SEQUENCE [LARGE SCALE MRNA] (ISOFORM 1)</scope>
    <scope>VARIANT GLN-561</scope>
    <source>
        <tissue>Muscle</tissue>
    </source>
</reference>
<reference key="4">
    <citation type="journal article" date="1995" name="Genomics">
        <title>Isolation and fine mapping of 16 novel human zinc finger-encoding cDNAs identify putative candidate genes for developmental and malignant disorders.</title>
        <authorList>
            <person name="Tommerup N."/>
            <person name="Vissing H."/>
        </authorList>
    </citation>
    <scope>NUCLEOTIDE SEQUENCE [MRNA] OF 3-638 (ISOFORM 1)</scope>
    <source>
        <tissue>Insulinoma</tissue>
    </source>
</reference>
<reference key="5">
    <citation type="journal article" date="1998" name="Nucleic Acids Res.">
        <title>Molecular cloning of a cDNA encoding human SPH-binding factor, a conserved protein that binds to the enhancer-like region of the U6 small nuclear RNA gene promoter.</title>
        <authorList>
            <person name="Rincon J.C."/>
            <person name="Engler S.K."/>
            <person name="Hargrove B.W."/>
            <person name="Kunkel G.R."/>
        </authorList>
    </citation>
    <scope>NUCLEOTIDE SEQUENCE [MRNA] OF 88-638 (ISOFORMS 1/2)</scope>
    <scope>VARIANT GLN-561</scope>
    <scope>FUNCTION</scope>
</reference>
<reference key="6">
    <citation type="journal article" date="2007" name="Mol. Cell. Biol.">
        <title>CHD8 associates with human Staf and contributes to efficient U6 RNA polymerase III transcription.</title>
        <authorList>
            <person name="Yuan C.-C."/>
            <person name="Zhao X."/>
            <person name="Florens L."/>
            <person name="Swanson S.K."/>
            <person name="Washburn M.P."/>
            <person name="Hernandez N."/>
        </authorList>
    </citation>
    <scope>FUNCTION</scope>
    <scope>INTERACTION WITH CHD8</scope>
</reference>
<reference key="7">
    <citation type="journal article" date="2012" name="Proc. Natl. Acad. Sci. U.S.A.">
        <title>N-terminal acetylome analyses and functional insights of the N-terminal acetyltransferase NatB.</title>
        <authorList>
            <person name="Van Damme P."/>
            <person name="Lasa M."/>
            <person name="Polevoda B."/>
            <person name="Gazquez C."/>
            <person name="Elosegui-Artola A."/>
            <person name="Kim D.S."/>
            <person name="De Juan-Pardo E."/>
            <person name="Demeyer K."/>
            <person name="Hole K."/>
            <person name="Larrea E."/>
            <person name="Timmerman E."/>
            <person name="Prieto J."/>
            <person name="Arnesen T."/>
            <person name="Sherman F."/>
            <person name="Gevaert K."/>
            <person name="Aldabe R."/>
        </authorList>
    </citation>
    <scope>ACETYLATION [LARGE SCALE ANALYSIS] AT MET-1</scope>
    <scope>IDENTIFICATION BY MASS SPECTROMETRY [LARGE SCALE ANALYSIS]</scope>
</reference>
<reference key="8">
    <citation type="journal article" date="2013" name="J. Proteome Res.">
        <title>Toward a comprehensive characterization of a human cancer cell phosphoproteome.</title>
        <authorList>
            <person name="Zhou H."/>
            <person name="Di Palma S."/>
            <person name="Preisinger C."/>
            <person name="Peng M."/>
            <person name="Polat A.N."/>
            <person name="Heck A.J."/>
            <person name="Mohammed S."/>
        </authorList>
    </citation>
    <scope>PHOSPHORYLATION [LARGE SCALE ANALYSIS] AT THR-352</scope>
    <scope>IDENTIFICATION BY MASS SPECTROMETRY [LARGE SCALE ANALYSIS]</scope>
    <source>
        <tissue>Erythroleukemia</tissue>
    </source>
</reference>
<reference key="9">
    <citation type="journal article" date="2015" name="Mol. Cell. Biol.">
        <title>Genomic Determinants of THAP11/ZNF143/HCFC1 Complex Recruitment to Chromatin.</title>
        <authorList>
            <person name="Vinckevicius A."/>
            <person name="Parker J.B."/>
            <person name="Chakravarti D."/>
        </authorList>
    </citation>
    <scope>FUNCTION</scope>
    <scope>INTERACTION WITH HCFC1 AND THAP11</scope>
</reference>
<reference key="10">
    <citation type="journal article" date="2017" name="Nat. Struct. Mol. Biol.">
        <title>Site-specific mapping of the human SUMO proteome reveals co-modification with phosphorylation.</title>
        <authorList>
            <person name="Hendriks I.A."/>
            <person name="Lyon D."/>
            <person name="Young C."/>
            <person name="Jensen L.J."/>
            <person name="Vertegaal A.C."/>
            <person name="Nielsen M.L."/>
        </authorList>
    </citation>
    <scope>SUMOYLATION [LARGE SCALE ANALYSIS] AT LYS-213 AND LYS-406</scope>
    <scope>IDENTIFICATION BY MASS SPECTROMETRY [LARGE SCALE ANALYSIS]</scope>
</reference>
<protein>
    <recommendedName>
        <fullName>Zinc finger protein 143</fullName>
    </recommendedName>
    <alternativeName>
        <fullName>SPH-binding factor</fullName>
    </alternativeName>
    <alternativeName>
        <fullName>Selenocysteine tRNA gene transcription-activating factor</fullName>
        <shortName>hStaf</shortName>
    </alternativeName>
</protein>
<sequence>MLLAQINRDSQGMTEFPGGGMEAQHVTLCLTEAVTVADGDNLENMEGVSLQAVTLADGSTAYIQHNSKDAKLIDGQVIQLEDGSAAYVQHVPIPKSTGDSLRLEDGQAVQLEDGTTAFIHHTSKDSYDQSALQAVQLEDGTTAYIHHAVQVPQSDTILAIQADGTVAGLHTGDATIDPDTISALEQYAAKVSIDGSESVAGTGMIGENEQEKKMQIVLQGHATRVTAKSQQSGEKAFRCEYDGCGKLYTTAHHLKVHERSHTGDRPYQCEHAGCGKAFATGYGLKSHVRTHTGEKPYRCSEDNCTKSFKTSGDLQKHIRTHTGERPFKCPFEGCGRSFTTSNIRKVHVRTHTGERPYYCTEPGCGRAFASATNYKNHVRIHTGEKPYVCTVPGCDKRFTEYSSLYKHHVVHTHSKPYNCNHCGKTYKQISTLAMHKRTAHNDTEPIEEEQEAFFEPPPGQGEDVLKGSQITYVTGVEGDDVVSTQVATVTQSGLSQQVTLISQDGTQHVNISQADMQAIGNTITMVTQDGTPITVPAHDAVISSAGTHSVAMVTAEGTEGEQVAIVAQDLAAFHTASSEMGHQQHSHHLVTTETRPLTLVATSNGTQIAVQLGEQPSLEEAIRIASRIQQGETPGLDD</sequence>
<feature type="chain" id="PRO_0000047426" description="Zinc finger protein 143">
    <location>
        <begin position="1"/>
        <end position="638"/>
    </location>
</feature>
<feature type="zinc finger region" description="C2H2-type 1" evidence="1">
    <location>
        <begin position="237"/>
        <end position="261"/>
    </location>
</feature>
<feature type="zinc finger region" description="C2H2-type 2" evidence="1">
    <location>
        <begin position="267"/>
        <end position="291"/>
    </location>
</feature>
<feature type="zinc finger region" description="C2H2-type 3" evidence="1">
    <location>
        <begin position="297"/>
        <end position="321"/>
    </location>
</feature>
<feature type="zinc finger region" description="C2H2-type 4" evidence="1">
    <location>
        <begin position="327"/>
        <end position="351"/>
    </location>
</feature>
<feature type="zinc finger region" description="C2H2-type 5" evidence="1">
    <location>
        <begin position="357"/>
        <end position="381"/>
    </location>
</feature>
<feature type="zinc finger region" description="C2H2-type 6" evidence="1">
    <location>
        <begin position="387"/>
        <end position="411"/>
    </location>
</feature>
<feature type="zinc finger region" description="C2H2-type 7" evidence="1">
    <location>
        <begin position="417"/>
        <end position="440"/>
    </location>
</feature>
<feature type="modified residue" description="N-acetylmethionine" evidence="10">
    <location>
        <position position="1"/>
    </location>
</feature>
<feature type="modified residue" description="Phosphothreonine" evidence="11">
    <location>
        <position position="352"/>
    </location>
</feature>
<feature type="cross-link" description="Glycyl lysine isopeptide (Lys-Gly) (interchain with G-Cter in SUMO2)" evidence="12">
    <location>
        <position position="213"/>
    </location>
</feature>
<feature type="cross-link" description="Glycyl lysine isopeptide (Lys-Gly) (interchain with G-Cter in SUMO2)" evidence="12">
    <location>
        <position position="406"/>
    </location>
</feature>
<feature type="splice variant" id="VSP_036978" description="In isoform 2." evidence="7">
    <location>
        <begin position="39"/>
        <end position="69"/>
    </location>
</feature>
<feature type="splice variant" id="VSP_055109" description="In isoform 3." evidence="7">
    <original>TG</original>
    <variation>R</variation>
    <location>
        <begin position="97"/>
        <end position="98"/>
    </location>
</feature>
<feature type="sequence variant" id="VAR_061937" description="In dbSNP:rs34972213.">
    <original>G</original>
    <variation>D</variation>
    <location>
        <position position="461"/>
    </location>
</feature>
<feature type="sequence variant" id="VAR_027254" description="In dbSNP:rs10743108." evidence="2 3 6">
    <original>E</original>
    <variation>Q</variation>
    <location>
        <position position="561"/>
    </location>
</feature>
<feature type="sequence conflict" description="In Ref. 3; AAH20219." evidence="8" ref="3">
    <original>A</original>
    <variation>V</variation>
    <location>
        <position position="433"/>
    </location>
</feature>
<feature type="sequence conflict" description="In Ref. 1; AK313330." evidence="8" ref="1">
    <original>T</original>
    <variation>A</variation>
    <location>
        <position position="443"/>
    </location>
</feature>
<feature type="sequence conflict" description="In Ref. 1; BAG59697." evidence="8" ref="1">
    <location>
        <position position="590"/>
    </location>
</feature>
<evidence type="ECO:0000255" key="1">
    <source>
        <dbReference type="PROSITE-ProRule" id="PRU00042"/>
    </source>
</evidence>
<evidence type="ECO:0000269" key="2">
    <source>
    </source>
</evidence>
<evidence type="ECO:0000269" key="3">
    <source>
    </source>
</evidence>
<evidence type="ECO:0000269" key="4">
    <source>
    </source>
</evidence>
<evidence type="ECO:0000269" key="5">
    <source>
    </source>
</evidence>
<evidence type="ECO:0000269" key="6">
    <source>
    </source>
</evidence>
<evidence type="ECO:0000303" key="7">
    <source>
    </source>
</evidence>
<evidence type="ECO:0000305" key="8"/>
<evidence type="ECO:0000305" key="9">
    <source>
    </source>
</evidence>
<evidence type="ECO:0007744" key="10">
    <source>
    </source>
</evidence>
<evidence type="ECO:0007744" key="11">
    <source>
    </source>
</evidence>
<evidence type="ECO:0007744" key="12">
    <source>
    </source>
</evidence>
<keyword id="KW-0007">Acetylation</keyword>
<keyword id="KW-0010">Activator</keyword>
<keyword id="KW-0025">Alternative splicing</keyword>
<keyword id="KW-0238">DNA-binding</keyword>
<keyword id="KW-1017">Isopeptide bond</keyword>
<keyword id="KW-0479">Metal-binding</keyword>
<keyword id="KW-0539">Nucleus</keyword>
<keyword id="KW-0597">Phosphoprotein</keyword>
<keyword id="KW-1267">Proteomics identification</keyword>
<keyword id="KW-1185">Reference proteome</keyword>
<keyword id="KW-0677">Repeat</keyword>
<keyword id="KW-0804">Transcription</keyword>
<keyword id="KW-0805">Transcription regulation</keyword>
<keyword id="KW-0832">Ubl conjugation</keyword>
<keyword id="KW-0862">Zinc</keyword>
<keyword id="KW-0863">Zinc-finger</keyword>
<proteinExistence type="evidence at protein level"/>
<comment type="function">
    <text evidence="4 5 6">Transcriptional activator. Activates the gene for selenocysteine tRNA (tRNAsec). Binds to the SPH motif of small nuclear RNA (snRNA) gene promoters. Participates in efficient U6 RNA polymerase III transcription via its interaction with CHD8. In complex with HCFC1 and ZNF143, regulates the expression of several genes, including AP2S1, ESCO2, OPHN1, RBL1, UBXN8 and ZNF32 (PubMed:26416877).</text>
</comment>
<comment type="subunit">
    <text evidence="4 9">Interacts with CHD8 (PubMed:17938208). Forms a complex with HCFC1 and ZNF143 (Probable).</text>
</comment>
<comment type="interaction">
    <interactant intactId="EBI-2849334">
        <id>P52747</id>
    </interactant>
    <interactant intactId="EBI-769261">
        <id>Q96JC9</id>
        <label>EAF1</label>
    </interactant>
    <organismsDiffer>false</organismsDiffer>
    <experiments>3</experiments>
</comment>
<comment type="interaction">
    <interactant intactId="EBI-2849334">
        <id>P52747</id>
    </interactant>
    <interactant intactId="EBI-744099">
        <id>Q9H0I2</id>
        <label>ENKD1</label>
    </interactant>
    <organismsDiffer>false</organismsDiffer>
    <experiments>3</experiments>
</comment>
<comment type="interaction">
    <interactant intactId="EBI-2849334">
        <id>P52747</id>
    </interactant>
    <interactant intactId="EBI-371892">
        <id>Q9Y3B2</id>
        <label>EXOSC1</label>
    </interactant>
    <organismsDiffer>false</organismsDiffer>
    <experiments>3</experiments>
</comment>
<comment type="interaction">
    <interactant intactId="EBI-2849334">
        <id>P52747</id>
    </interactant>
    <interactant intactId="EBI-6658203">
        <id>Q86YD7</id>
        <label>FAM90A1</label>
    </interactant>
    <organismsDiffer>false</organismsDiffer>
    <experiments>3</experiments>
</comment>
<comment type="interaction">
    <interactant intactId="EBI-2849334">
        <id>P52747</id>
    </interactant>
    <interactant intactId="EBI-701903">
        <id>Q14192</id>
        <label>FHL2</label>
    </interactant>
    <organismsDiffer>false</organismsDiffer>
    <experiments>4</experiments>
</comment>
<comment type="interaction">
    <interactant intactId="EBI-2849334">
        <id>P52747</id>
    </interactant>
    <interactant intactId="EBI-744302">
        <id>P14136</id>
        <label>GFAP</label>
    </interactant>
    <organismsDiffer>false</organismsDiffer>
    <experiments>2</experiments>
</comment>
<comment type="interaction">
    <interactant intactId="EBI-2849334">
        <id>P52747</id>
    </interactant>
    <interactant intactId="EBI-17178971">
        <id>Q14005-2</id>
        <label>IL16</label>
    </interactant>
    <organismsDiffer>false</organismsDiffer>
    <experiments>3</experiments>
</comment>
<comment type="interaction">
    <interactant intactId="EBI-2849334">
        <id>P52747</id>
    </interactant>
    <interactant intactId="EBI-10220600">
        <id>Q8NA54</id>
        <label>IQUB</label>
    </interactant>
    <organismsDiffer>false</organismsDiffer>
    <experiments>3</experiments>
</comment>
<comment type="interaction">
    <interactant intactId="EBI-2849334">
        <id>P52747</id>
    </interactant>
    <interactant intactId="EBI-1389411">
        <id>Q6MZP7</id>
        <label>LIN54</label>
    </interactant>
    <organismsDiffer>false</organismsDiffer>
    <experiments>3</experiments>
</comment>
<comment type="interaction">
    <interactant intactId="EBI-2849334">
        <id>P52747</id>
    </interactant>
    <interactant intactId="EBI-8639312">
        <id>P25800</id>
        <label>LMO1</label>
    </interactant>
    <organismsDiffer>false</organismsDiffer>
    <experiments>3</experiments>
</comment>
<comment type="interaction">
    <interactant intactId="EBI-2849334">
        <id>P52747</id>
    </interactant>
    <interactant intactId="EBI-11742507">
        <id>Q8TAP4-4</id>
        <label>LMO3</label>
    </interactant>
    <organismsDiffer>false</organismsDiffer>
    <experiments>3</experiments>
</comment>
<comment type="interaction">
    <interactant intactId="EBI-2849334">
        <id>P52747</id>
    </interactant>
    <interactant intactId="EBI-10297093">
        <id>Q9BRQ3</id>
        <label>NUDT22</label>
    </interactant>
    <organismsDiffer>false</organismsDiffer>
    <experiments>3</experiments>
</comment>
<comment type="interaction">
    <interactant intactId="EBI-2849334">
        <id>P52747</id>
    </interactant>
    <interactant intactId="EBI-1389308">
        <id>Q7Z3K3</id>
        <label>POGZ</label>
    </interactant>
    <organismsDiffer>false</organismsDiffer>
    <experiments>3</experiments>
</comment>
<comment type="interaction">
    <interactant intactId="EBI-2849334">
        <id>P52747</id>
    </interactant>
    <interactant intactId="EBI-372475">
        <id>P14678-2</id>
        <label>SNRPB</label>
    </interactant>
    <organismsDiffer>false</organismsDiffer>
    <experiments>3</experiments>
</comment>
<comment type="interaction">
    <interactant intactId="EBI-2849334">
        <id>P52747</id>
    </interactant>
    <interactant intactId="EBI-12037215">
        <id>Q5MJ09</id>
        <label>SPANXN3</label>
    </interactant>
    <organismsDiffer>false</organismsDiffer>
    <experiments>3</experiments>
</comment>
<comment type="interaction">
    <interactant intactId="EBI-2849334">
        <id>P52747</id>
    </interactant>
    <interactant intactId="EBI-3921347">
        <id>P51687</id>
        <label>SUOX</label>
    </interactant>
    <organismsDiffer>false</organismsDiffer>
    <experiments>3</experiments>
</comment>
<comment type="interaction">
    <interactant intactId="EBI-2849334">
        <id>P52747</id>
    </interactant>
    <interactant intactId="EBI-358708">
        <id>Q9NYJ8</id>
        <label>TAB2</label>
    </interactant>
    <organismsDiffer>false</organismsDiffer>
    <experiments>3</experiments>
</comment>
<comment type="interaction">
    <interactant intactId="EBI-2849334">
        <id>P52747</id>
    </interactant>
    <interactant intactId="EBI-11974855">
        <id>Q9Y4C2-2</id>
        <label>TCAF1</label>
    </interactant>
    <organismsDiffer>false</organismsDiffer>
    <experiments>3</experiments>
</comment>
<comment type="interaction">
    <interactant intactId="EBI-2849334">
        <id>P52747</id>
    </interactant>
    <interactant intactId="EBI-10300345">
        <id>Q9BW85</id>
        <label>YJU2</label>
    </interactant>
    <organismsDiffer>false</organismsDiffer>
    <experiments>3</experiments>
</comment>
<comment type="interaction">
    <interactant intactId="EBI-2849334">
        <id>P52747</id>
    </interactant>
    <interactant intactId="EBI-11962468">
        <id>Q7Z4V0</id>
        <label>ZNF438</label>
    </interactant>
    <organismsDiffer>false</organismsDiffer>
    <experiments>3</experiments>
</comment>
<comment type="interaction">
    <interactant intactId="EBI-2849334">
        <id>P52747</id>
    </interactant>
    <interactant intactId="EBI-1049952">
        <id>Q96KM6</id>
        <label>ZNF512B</label>
    </interactant>
    <organismsDiffer>false</organismsDiffer>
    <experiments>3</experiments>
</comment>
<comment type="subcellular location">
    <subcellularLocation>
        <location evidence="8">Nucleus</location>
    </subcellularLocation>
</comment>
<comment type="alternative products">
    <event type="alternative splicing"/>
    <isoform>
        <id>P52747-1</id>
        <name>1</name>
        <sequence type="displayed"/>
    </isoform>
    <isoform>
        <id>P52747-2</id>
        <name>2</name>
        <sequence type="described" ref="VSP_036978"/>
    </isoform>
    <isoform>
        <id>P52747-3</id>
        <name>3</name>
        <sequence type="described" ref="VSP_055109"/>
    </isoform>
</comment>
<comment type="tissue specificity">
    <text>Expressed in all tissues tested, with the strongest expression in ovary.</text>
</comment>
<comment type="similarity">
    <text evidence="8">Belongs to the GLI C2H2-type zinc-finger protein family.</text>
</comment>
<comment type="sequence caution" evidence="8">
    <conflict type="erroneous initiation">
        <sequence resource="EMBL-CDS" id="AAC50266"/>
    </conflict>
</comment>
<comment type="sequence caution" evidence="8">
    <conflict type="erroneous initiation">
        <sequence resource="EMBL-CDS" id="AAH20219"/>
    </conflict>
</comment>
<comment type="sequence caution" evidence="8">
    <conflict type="erroneous initiation">
        <sequence resource="EMBL-CDS" id="BAF83822"/>
    </conflict>
</comment>
<name>ZN143_HUMAN</name>
<organism>
    <name type="scientific">Homo sapiens</name>
    <name type="common">Human</name>
    <dbReference type="NCBI Taxonomy" id="9606"/>
    <lineage>
        <taxon>Eukaryota</taxon>
        <taxon>Metazoa</taxon>
        <taxon>Chordata</taxon>
        <taxon>Craniata</taxon>
        <taxon>Vertebrata</taxon>
        <taxon>Euteleostomi</taxon>
        <taxon>Mammalia</taxon>
        <taxon>Eutheria</taxon>
        <taxon>Euarchontoglires</taxon>
        <taxon>Primates</taxon>
        <taxon>Haplorrhini</taxon>
        <taxon>Catarrhini</taxon>
        <taxon>Hominidae</taxon>
        <taxon>Homo</taxon>
    </lineage>
</organism>
<dbReference type="EMBL" id="AK291133">
    <property type="protein sequence ID" value="BAF83822.1"/>
    <property type="status" value="ALT_INIT"/>
    <property type="molecule type" value="mRNA"/>
</dbReference>
<dbReference type="EMBL" id="AK297214">
    <property type="protein sequence ID" value="BAG59697.1"/>
    <property type="molecule type" value="mRNA"/>
</dbReference>
<dbReference type="EMBL" id="AK313330">
    <property type="status" value="NOT_ANNOTATED_CDS"/>
    <property type="molecule type" value="mRNA"/>
</dbReference>
<dbReference type="EMBL" id="AC127030">
    <property type="status" value="NOT_ANNOTATED_CDS"/>
    <property type="molecule type" value="Genomic_DNA"/>
</dbReference>
<dbReference type="EMBL" id="AC132192">
    <property type="status" value="NOT_ANNOTATED_CDS"/>
    <property type="molecule type" value="Genomic_DNA"/>
</dbReference>
<dbReference type="EMBL" id="BC020219">
    <property type="protein sequence ID" value="AAH20219.1"/>
    <property type="status" value="ALT_INIT"/>
    <property type="molecule type" value="mRNA"/>
</dbReference>
<dbReference type="EMBL" id="U09850">
    <property type="protein sequence ID" value="AAC50266.1"/>
    <property type="status" value="ALT_INIT"/>
    <property type="molecule type" value="mRNA"/>
</dbReference>
<dbReference type="EMBL" id="AF071771">
    <property type="protein sequence ID" value="AAC96102.1"/>
    <property type="molecule type" value="mRNA"/>
</dbReference>
<dbReference type="CCDS" id="CCDS60720.1">
    <molecule id="P52747-3"/>
</dbReference>
<dbReference type="CCDS" id="CCDS60721.1">
    <molecule id="P52747-2"/>
</dbReference>
<dbReference type="CCDS" id="CCDS7799.2">
    <molecule id="P52747-1"/>
</dbReference>
<dbReference type="PIR" id="I38618">
    <property type="entry name" value="I38618"/>
</dbReference>
<dbReference type="RefSeq" id="NP_001269585.1">
    <molecule id="P52747-3"/>
    <property type="nucleotide sequence ID" value="NM_001282656.2"/>
</dbReference>
<dbReference type="RefSeq" id="NP_001269586.1">
    <molecule id="P52747-2"/>
    <property type="nucleotide sequence ID" value="NM_001282657.2"/>
</dbReference>
<dbReference type="RefSeq" id="NP_003433.3">
    <molecule id="P52747-1"/>
    <property type="nucleotide sequence ID" value="NM_003442.5"/>
</dbReference>
<dbReference type="RefSeq" id="XP_011518651.1">
    <molecule id="P52747-1"/>
    <property type="nucleotide sequence ID" value="XM_011520349.3"/>
</dbReference>
<dbReference type="RefSeq" id="XP_016873743.1">
    <molecule id="P52747-3"/>
    <property type="nucleotide sequence ID" value="XM_017018254.3"/>
</dbReference>
<dbReference type="RefSeq" id="XP_016873744.1">
    <molecule id="P52747-3"/>
    <property type="nucleotide sequence ID" value="XM_017018255.2"/>
</dbReference>
<dbReference type="RefSeq" id="XP_047283508.1">
    <molecule id="P52747-1"/>
    <property type="nucleotide sequence ID" value="XM_047427552.1"/>
</dbReference>
<dbReference type="RefSeq" id="XP_047283509.1">
    <molecule id="P52747-1"/>
    <property type="nucleotide sequence ID" value="XM_047427553.1"/>
</dbReference>
<dbReference type="RefSeq" id="XP_047283510.1">
    <molecule id="P52747-1"/>
    <property type="nucleotide sequence ID" value="XM_047427554.1"/>
</dbReference>
<dbReference type="RefSeq" id="XP_047283511.1">
    <molecule id="P52747-1"/>
    <property type="nucleotide sequence ID" value="XM_047427555.1"/>
</dbReference>
<dbReference type="RefSeq" id="XP_047283512.1">
    <molecule id="P52747-3"/>
    <property type="nucleotide sequence ID" value="XM_047427556.1"/>
</dbReference>
<dbReference type="RefSeq" id="XP_047283513.1">
    <molecule id="P52747-3"/>
    <property type="nucleotide sequence ID" value="XM_047427557.1"/>
</dbReference>
<dbReference type="SMR" id="P52747"/>
<dbReference type="BioGRID" id="113496">
    <property type="interactions" value="56"/>
</dbReference>
<dbReference type="CORUM" id="P52747"/>
<dbReference type="FunCoup" id="P52747">
    <property type="interactions" value="4365"/>
</dbReference>
<dbReference type="IntAct" id="P52747">
    <property type="interactions" value="36"/>
</dbReference>
<dbReference type="MINT" id="P52747"/>
<dbReference type="STRING" id="9606.ENSP00000379847"/>
<dbReference type="GlyGen" id="P52747">
    <property type="glycosylation" value="1 site, 1 O-linked glycan (1 site)"/>
</dbReference>
<dbReference type="iPTMnet" id="P52747"/>
<dbReference type="PhosphoSitePlus" id="P52747"/>
<dbReference type="BioMuta" id="ZNF143"/>
<dbReference type="DMDM" id="229462806"/>
<dbReference type="jPOST" id="P52747"/>
<dbReference type="MassIVE" id="P52747"/>
<dbReference type="PaxDb" id="9606-ENSP00000379847"/>
<dbReference type="PeptideAtlas" id="P52747"/>
<dbReference type="ProteomicsDB" id="17706"/>
<dbReference type="ProteomicsDB" id="56522">
    <molecule id="P52747-1"/>
</dbReference>
<dbReference type="ProteomicsDB" id="56523">
    <molecule id="P52747-2"/>
</dbReference>
<dbReference type="Pumba" id="P52747"/>
<dbReference type="Antibodypedia" id="927">
    <property type="antibodies" value="86 antibodies from 25 providers"/>
</dbReference>
<dbReference type="DNASU" id="7702"/>
<dbReference type="Ensembl" id="ENST00000396597.7">
    <molecule id="P52747-2"/>
    <property type="protein sequence ID" value="ENSP00000379843.3"/>
    <property type="gene ID" value="ENSG00000166478.10"/>
</dbReference>
<dbReference type="Ensembl" id="ENST00000396602.7">
    <molecule id="P52747-1"/>
    <property type="protein sequence ID" value="ENSP00000379847.2"/>
    <property type="gene ID" value="ENSG00000166478.10"/>
</dbReference>
<dbReference type="Ensembl" id="ENST00000396604.5">
    <molecule id="P52747-3"/>
    <property type="protein sequence ID" value="ENSP00000379849.1"/>
    <property type="gene ID" value="ENSG00000166478.10"/>
</dbReference>
<dbReference type="Ensembl" id="ENST00000530463.5">
    <molecule id="P52747-3"/>
    <property type="protein sequence ID" value="ENSP00000432154.1"/>
    <property type="gene ID" value="ENSG00000166478.10"/>
</dbReference>
<dbReference type="GeneID" id="7702"/>
<dbReference type="KEGG" id="hsa:7702"/>
<dbReference type="MANE-Select" id="ENST00000396602.7">
    <property type="protein sequence ID" value="ENSP00000379847.2"/>
    <property type="RefSeq nucleotide sequence ID" value="NM_003442.6"/>
    <property type="RefSeq protein sequence ID" value="NP_003433.3"/>
</dbReference>
<dbReference type="UCSC" id="uc001mhr.3">
    <molecule id="P52747-1"/>
    <property type="organism name" value="human"/>
</dbReference>
<dbReference type="AGR" id="HGNC:12928"/>
<dbReference type="CTD" id="7702"/>
<dbReference type="DisGeNET" id="7702"/>
<dbReference type="GeneCards" id="ZNF143"/>
<dbReference type="GeneReviews" id="ZNF143"/>
<dbReference type="HGNC" id="HGNC:12928">
    <property type="gene designation" value="ZNF143"/>
</dbReference>
<dbReference type="HPA" id="ENSG00000166478">
    <property type="expression patterns" value="Low tissue specificity"/>
</dbReference>
<dbReference type="MalaCards" id="ZNF143"/>
<dbReference type="MIM" id="603433">
    <property type="type" value="gene"/>
</dbReference>
<dbReference type="neXtProt" id="NX_P52747"/>
<dbReference type="OpenTargets" id="ENSG00000166478"/>
<dbReference type="PharmGKB" id="PA37515"/>
<dbReference type="VEuPathDB" id="HostDB:ENSG00000166478"/>
<dbReference type="eggNOG" id="KOG1721">
    <property type="taxonomic scope" value="Eukaryota"/>
</dbReference>
<dbReference type="GeneTree" id="ENSGT00940000157584"/>
<dbReference type="HOGENOM" id="CLU_027168_0_0_1"/>
<dbReference type="InParanoid" id="P52747"/>
<dbReference type="OMA" id="FPALMHG"/>
<dbReference type="OrthoDB" id="6077919at2759"/>
<dbReference type="PAN-GO" id="P52747">
    <property type="GO annotations" value="3 GO annotations based on evolutionary models"/>
</dbReference>
<dbReference type="PhylomeDB" id="P52747"/>
<dbReference type="TreeFam" id="TF333498"/>
<dbReference type="PathwayCommons" id="P52747"/>
<dbReference type="Reactome" id="R-HSA-6807505">
    <property type="pathway name" value="RNA polymerase II transcribes snRNA genes"/>
</dbReference>
<dbReference type="Reactome" id="R-HSA-749476">
    <property type="pathway name" value="RNA Polymerase III Abortive And Retractive Initiation"/>
</dbReference>
<dbReference type="Reactome" id="R-HSA-76071">
    <property type="pathway name" value="RNA Polymerase III Transcription Initiation From Type 3 Promoter"/>
</dbReference>
<dbReference type="SignaLink" id="P52747"/>
<dbReference type="SIGNOR" id="P52747"/>
<dbReference type="BioGRID-ORCS" id="7702">
    <property type="hits" value="141 hits in 1186 CRISPR screens"/>
</dbReference>
<dbReference type="ChiTaRS" id="ZNF143">
    <property type="organism name" value="human"/>
</dbReference>
<dbReference type="GeneWiki" id="ZNF143"/>
<dbReference type="GenomeRNAi" id="7702"/>
<dbReference type="Pharos" id="P52747">
    <property type="development level" value="Tbio"/>
</dbReference>
<dbReference type="PRO" id="PR:P52747"/>
<dbReference type="Proteomes" id="UP000005640">
    <property type="component" value="Chromosome 11"/>
</dbReference>
<dbReference type="RNAct" id="P52747">
    <property type="molecule type" value="protein"/>
</dbReference>
<dbReference type="Bgee" id="ENSG00000166478">
    <property type="expression patterns" value="Expressed in calcaneal tendon and 174 other cell types or tissues"/>
</dbReference>
<dbReference type="ExpressionAtlas" id="P52747">
    <property type="expression patterns" value="baseline and differential"/>
</dbReference>
<dbReference type="GO" id="GO:0005654">
    <property type="term" value="C:nucleoplasm"/>
    <property type="evidence" value="ECO:0000304"/>
    <property type="project" value="Reactome"/>
</dbReference>
<dbReference type="GO" id="GO:0001228">
    <property type="term" value="F:DNA-binding transcription activator activity, RNA polymerase II-specific"/>
    <property type="evidence" value="ECO:0000314"/>
    <property type="project" value="NTNU_SB"/>
</dbReference>
<dbReference type="GO" id="GO:0000981">
    <property type="term" value="F:DNA-binding transcription factor activity, RNA polymerase II-specific"/>
    <property type="evidence" value="ECO:0000318"/>
    <property type="project" value="GO_Central"/>
</dbReference>
<dbReference type="GO" id="GO:0000978">
    <property type="term" value="F:RNA polymerase II cis-regulatory region sequence-specific DNA binding"/>
    <property type="evidence" value="ECO:0000314"/>
    <property type="project" value="NTNU_SB"/>
</dbReference>
<dbReference type="GO" id="GO:0008270">
    <property type="term" value="F:zinc ion binding"/>
    <property type="evidence" value="ECO:0007669"/>
    <property type="project" value="UniProtKB-KW"/>
</dbReference>
<dbReference type="GO" id="GO:1905382">
    <property type="term" value="P:positive regulation of snRNA transcription by RNA polymerase II"/>
    <property type="evidence" value="ECO:0000269"/>
    <property type="project" value="GO_Central"/>
</dbReference>
<dbReference type="GO" id="GO:0045944">
    <property type="term" value="P:positive regulation of transcription by RNA polymerase II"/>
    <property type="evidence" value="ECO:0000314"/>
    <property type="project" value="NTNU_SB"/>
</dbReference>
<dbReference type="GO" id="GO:0045945">
    <property type="term" value="P:positive regulation of transcription by RNA polymerase III"/>
    <property type="evidence" value="ECO:0000304"/>
    <property type="project" value="GO_Central"/>
</dbReference>
<dbReference type="GO" id="GO:0006355">
    <property type="term" value="P:regulation of DNA-templated transcription"/>
    <property type="evidence" value="ECO:0000318"/>
    <property type="project" value="GO_Central"/>
</dbReference>
<dbReference type="GO" id="GO:0006357">
    <property type="term" value="P:regulation of transcription by RNA polymerase II"/>
    <property type="evidence" value="ECO:0000304"/>
    <property type="project" value="ProtInc"/>
</dbReference>
<dbReference type="GO" id="GO:0006359">
    <property type="term" value="P:regulation of transcription by RNA polymerase III"/>
    <property type="evidence" value="ECO:0000304"/>
    <property type="project" value="ProtInc"/>
</dbReference>
<dbReference type="FunFam" id="3.30.160.60:FF:000071">
    <property type="entry name" value="Putative zinc finger protein 143"/>
    <property type="match status" value="1"/>
</dbReference>
<dbReference type="FunFam" id="3.30.160.60:FF:000125">
    <property type="entry name" value="Putative zinc finger protein 143"/>
    <property type="match status" value="1"/>
</dbReference>
<dbReference type="FunFam" id="3.30.160.60:FF:000137">
    <property type="entry name" value="Putative zinc finger protein 143"/>
    <property type="match status" value="1"/>
</dbReference>
<dbReference type="FunFam" id="3.30.160.60:FF:000142">
    <property type="entry name" value="Putative zinc finger protein 143"/>
    <property type="match status" value="1"/>
</dbReference>
<dbReference type="FunFam" id="3.30.160.60:FF:000072">
    <property type="entry name" value="zinc finger protein 143 isoform X1"/>
    <property type="match status" value="1"/>
</dbReference>
<dbReference type="FunFam" id="3.30.160.60:FF:000236">
    <property type="entry name" value="zinc finger protein 143 isoform X1"/>
    <property type="match status" value="1"/>
</dbReference>
<dbReference type="FunFam" id="3.30.160.60:FF:000016">
    <property type="entry name" value="zinc finger protein 37 homolog"/>
    <property type="match status" value="1"/>
</dbReference>
<dbReference type="Gene3D" id="3.30.160.60">
    <property type="entry name" value="Classic Zinc Finger"/>
    <property type="match status" value="7"/>
</dbReference>
<dbReference type="InterPro" id="IPR036236">
    <property type="entry name" value="Znf_C2H2_sf"/>
</dbReference>
<dbReference type="InterPro" id="IPR013087">
    <property type="entry name" value="Znf_C2H2_type"/>
</dbReference>
<dbReference type="PANTHER" id="PTHR23235">
    <property type="entry name" value="KRUEPPEL-LIKE TRANSCRIPTION FACTOR"/>
    <property type="match status" value="1"/>
</dbReference>
<dbReference type="PANTHER" id="PTHR23235:SF120">
    <property type="entry name" value="KRUPPEL-LIKE FACTOR 15"/>
    <property type="match status" value="1"/>
</dbReference>
<dbReference type="Pfam" id="PF00096">
    <property type="entry name" value="zf-C2H2"/>
    <property type="match status" value="5"/>
</dbReference>
<dbReference type="SMART" id="SM00355">
    <property type="entry name" value="ZnF_C2H2"/>
    <property type="match status" value="7"/>
</dbReference>
<dbReference type="SUPFAM" id="SSF57667">
    <property type="entry name" value="beta-beta-alpha zinc fingers"/>
    <property type="match status" value="3"/>
</dbReference>
<dbReference type="PROSITE" id="PS00028">
    <property type="entry name" value="ZINC_FINGER_C2H2_1"/>
    <property type="match status" value="7"/>
</dbReference>
<dbReference type="PROSITE" id="PS50157">
    <property type="entry name" value="ZINC_FINGER_C2H2_2"/>
    <property type="match status" value="7"/>
</dbReference>